<comment type="function">
    <text evidence="1">Minor enzyme contributing to the isomerization of uridine to pseudouridine (pseudouridylation) of specific mitochondrial mRNAs (mt-mRNAs) such as COXI and COXIII mt-mRNAs, modulating the efficiency of mitochondrial protein synthesis without changes in transcript abundance or stability (By similarity). Also catalyzes pseudouridylation of some tRNAs, including synthesis of pseudouridine(55) from uracil-55, in the psi GC loop of a subset of tRNAs (By similarity).</text>
</comment>
<comment type="catalytic activity">
    <reaction evidence="1">
        <text>a uridine in mRNA = a pseudouridine in mRNA</text>
        <dbReference type="Rhea" id="RHEA:56644"/>
        <dbReference type="Rhea" id="RHEA-COMP:14658"/>
        <dbReference type="Rhea" id="RHEA-COMP:14659"/>
        <dbReference type="ChEBI" id="CHEBI:65314"/>
        <dbReference type="ChEBI" id="CHEBI:65315"/>
    </reaction>
</comment>
<comment type="catalytic activity">
    <reaction evidence="1">
        <text>uridine(55) in tRNA = pseudouridine(55) in tRNA</text>
        <dbReference type="Rhea" id="RHEA:42532"/>
        <dbReference type="Rhea" id="RHEA-COMP:10101"/>
        <dbReference type="Rhea" id="RHEA-COMP:10102"/>
        <dbReference type="ChEBI" id="CHEBI:65314"/>
        <dbReference type="ChEBI" id="CHEBI:65315"/>
        <dbReference type="EC" id="5.4.99.25"/>
    </reaction>
    <physiologicalReaction direction="left-to-right" evidence="1">
        <dbReference type="Rhea" id="RHEA:42533"/>
    </physiologicalReaction>
</comment>
<comment type="subcellular location">
    <subcellularLocation>
        <location evidence="1">Mitochondrion matrix</location>
    </subcellularLocation>
    <text evidence="1">Localizes to mitochondrial RNA granules, platforms for post-transcriptional RNA modification and ribosome assembly.</text>
</comment>
<comment type="similarity">
    <text evidence="5">Belongs to the pseudouridine synthase TruB family.</text>
</comment>
<organism>
    <name type="scientific">Xenopus tropicalis</name>
    <name type="common">Western clawed frog</name>
    <name type="synonym">Silurana tropicalis</name>
    <dbReference type="NCBI Taxonomy" id="8364"/>
    <lineage>
        <taxon>Eukaryota</taxon>
        <taxon>Metazoa</taxon>
        <taxon>Chordata</taxon>
        <taxon>Craniata</taxon>
        <taxon>Vertebrata</taxon>
        <taxon>Euteleostomi</taxon>
        <taxon>Amphibia</taxon>
        <taxon>Batrachia</taxon>
        <taxon>Anura</taxon>
        <taxon>Pipoidea</taxon>
        <taxon>Pipidae</taxon>
        <taxon>Xenopodinae</taxon>
        <taxon>Xenopus</taxon>
        <taxon>Silurana</taxon>
    </lineage>
</organism>
<sequence>MAQFAPGVFRTLHGLFAVYKPPGVHWKSVRDTVETNLLKELNALKQRPPRQQIRFLPAGTEGSNGLEVTRVPSAVPVLADHVLVKGPAFTHIRVGTGHRLDIQSSGVFVLGIGHGNKLLKDMYNSHFTRDYTVRGMLGKATEDFTELGKTIEKTTYDHITREKLERILAVIQGTNQKALITHSHLDLQSQEAYDLAVQGKLRPMVKSPPIILGIRCLEFSPPEFTLEIQCMHETQQYLRKMIHEIGLELRSSAVCTQVRRSRDGPFTVDCSLLRTQWDLGSIQGAIRECRAQTEGVSRGNPDREAAEGPIPGPSRGAEGEGELRA</sequence>
<keyword id="KW-0413">Isomerase</keyword>
<keyword id="KW-0496">Mitochondrion</keyword>
<keyword id="KW-0507">mRNA processing</keyword>
<keyword id="KW-1185">Reference proteome</keyword>
<keyword id="KW-0809">Transit peptide</keyword>
<keyword id="KW-0819">tRNA processing</keyword>
<reference key="1">
    <citation type="submission" date="2004-10" db="EMBL/GenBank/DDBJ databases">
        <authorList>
            <consortium name="NIH - Xenopus Gene Collection (XGC) project"/>
        </authorList>
    </citation>
    <scope>NUCLEOTIDE SEQUENCE [LARGE SCALE MRNA]</scope>
    <source>
        <tissue>Embryo</tissue>
    </source>
</reference>
<gene>
    <name evidence="1" type="primary">Trub2</name>
</gene>
<name>TRUB2_XENTR</name>
<dbReference type="EC" id="5.4.99.-" evidence="1"/>
<dbReference type="EC" id="5.4.99.25" evidence="1"/>
<dbReference type="EMBL" id="BC084478">
    <property type="protein sequence ID" value="AAH84478.1"/>
    <property type="molecule type" value="mRNA"/>
</dbReference>
<dbReference type="RefSeq" id="NP_001011086.1">
    <property type="nucleotide sequence ID" value="NM_001011086.1"/>
</dbReference>
<dbReference type="SMR" id="Q5XGG2"/>
<dbReference type="FunCoup" id="Q5XGG2">
    <property type="interactions" value="884"/>
</dbReference>
<dbReference type="PaxDb" id="8364-ENSXETP00000008598"/>
<dbReference type="DNASU" id="496499"/>
<dbReference type="GeneID" id="496499"/>
<dbReference type="KEGG" id="xtr:496499"/>
<dbReference type="AGR" id="Xenbase:XB-GENE-996199"/>
<dbReference type="CTD" id="26995"/>
<dbReference type="Xenbase" id="XB-GENE-996199">
    <property type="gene designation" value="trub2"/>
</dbReference>
<dbReference type="eggNOG" id="KOG2559">
    <property type="taxonomic scope" value="Eukaryota"/>
</dbReference>
<dbReference type="InParanoid" id="Q5XGG2"/>
<dbReference type="OrthoDB" id="9995526at2759"/>
<dbReference type="Proteomes" id="UP000008143">
    <property type="component" value="Chromosome 8"/>
</dbReference>
<dbReference type="GO" id="GO:0005759">
    <property type="term" value="C:mitochondrial matrix"/>
    <property type="evidence" value="ECO:0007669"/>
    <property type="project" value="UniProtKB-SubCell"/>
</dbReference>
<dbReference type="GO" id="GO:0009982">
    <property type="term" value="F:pseudouridine synthase activity"/>
    <property type="evidence" value="ECO:0000250"/>
    <property type="project" value="UniProtKB"/>
</dbReference>
<dbReference type="GO" id="GO:0003723">
    <property type="term" value="F:RNA binding"/>
    <property type="evidence" value="ECO:0007669"/>
    <property type="project" value="InterPro"/>
</dbReference>
<dbReference type="GO" id="GO:0160148">
    <property type="term" value="F:tRNA pseudouridine(55) synthase activity"/>
    <property type="evidence" value="ECO:0007669"/>
    <property type="project" value="RHEA"/>
</dbReference>
<dbReference type="GO" id="GO:0006397">
    <property type="term" value="P:mRNA processing"/>
    <property type="evidence" value="ECO:0007669"/>
    <property type="project" value="UniProtKB-KW"/>
</dbReference>
<dbReference type="GO" id="GO:0001522">
    <property type="term" value="P:pseudouridine synthesis"/>
    <property type="evidence" value="ECO:0007669"/>
    <property type="project" value="InterPro"/>
</dbReference>
<dbReference type="GO" id="GO:0008033">
    <property type="term" value="P:tRNA processing"/>
    <property type="evidence" value="ECO:0007669"/>
    <property type="project" value="UniProtKB-KW"/>
</dbReference>
<dbReference type="CDD" id="cd02868">
    <property type="entry name" value="PseudoU_synth_hTruB2_like"/>
    <property type="match status" value="1"/>
</dbReference>
<dbReference type="Gene3D" id="3.30.2350.10">
    <property type="entry name" value="Pseudouridine synthase"/>
    <property type="match status" value="1"/>
</dbReference>
<dbReference type="InterPro" id="IPR020103">
    <property type="entry name" value="PsdUridine_synth_cat_dom_sf"/>
</dbReference>
<dbReference type="InterPro" id="IPR002501">
    <property type="entry name" value="PsdUridine_synth_N"/>
</dbReference>
<dbReference type="InterPro" id="IPR039048">
    <property type="entry name" value="Trub2"/>
</dbReference>
<dbReference type="PANTHER" id="PTHR13195">
    <property type="entry name" value="PSEUDOURIDINE SYNTHASE-RELATED"/>
    <property type="match status" value="1"/>
</dbReference>
<dbReference type="PANTHER" id="PTHR13195:SF0">
    <property type="entry name" value="PSEUDOURIDYLATE SYNTHASE TRUB2, MITOCHONDRIAL"/>
    <property type="match status" value="1"/>
</dbReference>
<dbReference type="Pfam" id="PF01509">
    <property type="entry name" value="TruB_N"/>
    <property type="match status" value="1"/>
</dbReference>
<dbReference type="SUPFAM" id="SSF55120">
    <property type="entry name" value="Pseudouridine synthase"/>
    <property type="match status" value="1"/>
</dbReference>
<feature type="transit peptide" description="Mitochondrion" evidence="3">
    <location>
        <begin position="1"/>
        <end status="unknown"/>
    </location>
</feature>
<feature type="chain" id="PRO_0000252093" description="Pseudouridylate synthase TRUB2, mitochondrial">
    <location>
        <begin status="unknown"/>
        <end position="325"/>
    </location>
</feature>
<feature type="region of interest" description="Disordered" evidence="4">
    <location>
        <begin position="292"/>
        <end position="325"/>
    </location>
</feature>
<feature type="active site" description="Nucleophile" evidence="2">
    <location>
        <position position="101"/>
    </location>
</feature>
<proteinExistence type="evidence at transcript level"/>
<accession>Q5XGG2</accession>
<evidence type="ECO:0000250" key="1">
    <source>
        <dbReference type="UniProtKB" id="O95900"/>
    </source>
</evidence>
<evidence type="ECO:0000250" key="2">
    <source>
        <dbReference type="UniProtKB" id="Q9Y606"/>
    </source>
</evidence>
<evidence type="ECO:0000255" key="3"/>
<evidence type="ECO:0000256" key="4">
    <source>
        <dbReference type="SAM" id="MobiDB-lite"/>
    </source>
</evidence>
<evidence type="ECO:0000305" key="5"/>
<protein>
    <recommendedName>
        <fullName evidence="5">Pseudouridylate synthase TRUB2, mitochondrial</fullName>
        <ecNumber evidence="1">5.4.99.-</ecNumber>
    </recommendedName>
    <alternativeName>
        <fullName evidence="1">TruB pseudouridine synthase homolog 2</fullName>
    </alternativeName>
    <alternativeName>
        <fullName evidence="5">tRNA pseudouridine 55 synthase TRUB2</fullName>
        <shortName evidence="5">Psi55 synthase TRUB2</shortName>
        <ecNumber evidence="1">5.4.99.25</ecNumber>
    </alternativeName>
</protein>